<organism>
    <name type="scientific">Francisella tularensis subsp. novicida (strain U112)</name>
    <dbReference type="NCBI Taxonomy" id="401614"/>
    <lineage>
        <taxon>Bacteria</taxon>
        <taxon>Pseudomonadati</taxon>
        <taxon>Pseudomonadota</taxon>
        <taxon>Gammaproteobacteria</taxon>
        <taxon>Thiotrichales</taxon>
        <taxon>Francisellaceae</taxon>
        <taxon>Francisella</taxon>
    </lineage>
</organism>
<feature type="chain" id="PRO_1000005502" description="Large ribosomal subunit protein uL10">
    <location>
        <begin position="1"/>
        <end position="172"/>
    </location>
</feature>
<protein>
    <recommendedName>
        <fullName evidence="1">Large ribosomal subunit protein uL10</fullName>
    </recommendedName>
    <alternativeName>
        <fullName evidence="2">50S ribosomal protein L10</fullName>
    </alternativeName>
</protein>
<sequence length="172" mass="18719">MALRIEDKKAIVAEVAEQVSSALSAAVADYRGLTVNEMTSLRKQARESGVYLRVVRNNLARLAIKGTEFECLADALKGPLVLALSKDEPGAAAKLFKNFQKDHNAFEVKNLAMSGELFGPEKLDDFAKLPTREEALATLLNVMQAPVTKFVRTLNEIPSQAVRVFAAVGDSK</sequence>
<reference key="1">
    <citation type="journal article" date="2007" name="Genome Biol.">
        <title>Comparison of Francisella tularensis genomes reveals evolutionary events associated with the emergence of human pathogenic strains.</title>
        <authorList>
            <person name="Rohmer L."/>
            <person name="Fong C."/>
            <person name="Abmayr S."/>
            <person name="Wasnick M."/>
            <person name="Larson Freeman T.J."/>
            <person name="Radey M."/>
            <person name="Guina T."/>
            <person name="Svensson K."/>
            <person name="Hayden H.S."/>
            <person name="Jacobs M."/>
            <person name="Gallagher L.A."/>
            <person name="Manoil C."/>
            <person name="Ernst R.K."/>
            <person name="Drees B."/>
            <person name="Buckley D."/>
            <person name="Haugen E."/>
            <person name="Bovee D."/>
            <person name="Zhou Y."/>
            <person name="Chang J."/>
            <person name="Levy R."/>
            <person name="Lim R."/>
            <person name="Gillett W."/>
            <person name="Guenthener D."/>
            <person name="Kang A."/>
            <person name="Shaffer S.A."/>
            <person name="Taylor G."/>
            <person name="Chen J."/>
            <person name="Gallis B."/>
            <person name="D'Argenio D.A."/>
            <person name="Forsman M."/>
            <person name="Olson M.V."/>
            <person name="Goodlett D.R."/>
            <person name="Kaul R."/>
            <person name="Miller S.I."/>
            <person name="Brittnacher M.J."/>
        </authorList>
    </citation>
    <scope>NUCLEOTIDE SEQUENCE [LARGE SCALE GENOMIC DNA]</scope>
    <source>
        <strain>U112</strain>
    </source>
</reference>
<name>RL10_FRATN</name>
<keyword id="KW-0687">Ribonucleoprotein</keyword>
<keyword id="KW-0689">Ribosomal protein</keyword>
<keyword id="KW-0694">RNA-binding</keyword>
<keyword id="KW-0699">rRNA-binding</keyword>
<proteinExistence type="inferred from homology"/>
<accession>A0Q869</accession>
<gene>
    <name evidence="1" type="primary">rplJ</name>
    <name type="ordered locus">FTN_1570</name>
</gene>
<comment type="function">
    <text evidence="1">Forms part of the ribosomal stalk, playing a central role in the interaction of the ribosome with GTP-bound translation factors.</text>
</comment>
<comment type="subunit">
    <text evidence="1">Part of the ribosomal stalk of the 50S ribosomal subunit. The N-terminus interacts with L11 and the large rRNA to form the base of the stalk. The C-terminus forms an elongated spine to which L12 dimers bind in a sequential fashion forming a multimeric L10(L12)X complex.</text>
</comment>
<comment type="similarity">
    <text evidence="1">Belongs to the universal ribosomal protein uL10 family.</text>
</comment>
<dbReference type="EMBL" id="CP000439">
    <property type="protein sequence ID" value="ABK90434.1"/>
    <property type="molecule type" value="Genomic_DNA"/>
</dbReference>
<dbReference type="RefSeq" id="WP_003023073.1">
    <property type="nucleotide sequence ID" value="NZ_CP009633.1"/>
</dbReference>
<dbReference type="SMR" id="A0Q869"/>
<dbReference type="GeneID" id="75264698"/>
<dbReference type="KEGG" id="ftn:FTN_1570"/>
<dbReference type="KEGG" id="ftx:AW25_428"/>
<dbReference type="BioCyc" id="FTUL401614:G1G75-1622-MONOMER"/>
<dbReference type="Proteomes" id="UP000000762">
    <property type="component" value="Chromosome"/>
</dbReference>
<dbReference type="GO" id="GO:1990904">
    <property type="term" value="C:ribonucleoprotein complex"/>
    <property type="evidence" value="ECO:0007669"/>
    <property type="project" value="UniProtKB-KW"/>
</dbReference>
<dbReference type="GO" id="GO:0005840">
    <property type="term" value="C:ribosome"/>
    <property type="evidence" value="ECO:0007669"/>
    <property type="project" value="UniProtKB-KW"/>
</dbReference>
<dbReference type="GO" id="GO:0070180">
    <property type="term" value="F:large ribosomal subunit rRNA binding"/>
    <property type="evidence" value="ECO:0007669"/>
    <property type="project" value="UniProtKB-UniRule"/>
</dbReference>
<dbReference type="GO" id="GO:0006412">
    <property type="term" value="P:translation"/>
    <property type="evidence" value="ECO:0007669"/>
    <property type="project" value="UniProtKB-UniRule"/>
</dbReference>
<dbReference type="CDD" id="cd05797">
    <property type="entry name" value="Ribosomal_L10"/>
    <property type="match status" value="1"/>
</dbReference>
<dbReference type="Gene3D" id="3.30.70.1730">
    <property type="match status" value="1"/>
</dbReference>
<dbReference type="Gene3D" id="6.10.250.290">
    <property type="match status" value="1"/>
</dbReference>
<dbReference type="HAMAP" id="MF_00362">
    <property type="entry name" value="Ribosomal_uL10"/>
    <property type="match status" value="1"/>
</dbReference>
<dbReference type="InterPro" id="IPR001790">
    <property type="entry name" value="Ribosomal_uL10"/>
</dbReference>
<dbReference type="InterPro" id="IPR043141">
    <property type="entry name" value="Ribosomal_uL10-like_sf"/>
</dbReference>
<dbReference type="InterPro" id="IPR022973">
    <property type="entry name" value="Ribosomal_uL10_bac"/>
</dbReference>
<dbReference type="InterPro" id="IPR047865">
    <property type="entry name" value="Ribosomal_uL10_bac_type"/>
</dbReference>
<dbReference type="NCBIfam" id="NF000955">
    <property type="entry name" value="PRK00099.1-1"/>
    <property type="match status" value="1"/>
</dbReference>
<dbReference type="PANTHER" id="PTHR11560">
    <property type="entry name" value="39S RIBOSOMAL PROTEIN L10, MITOCHONDRIAL"/>
    <property type="match status" value="1"/>
</dbReference>
<dbReference type="Pfam" id="PF00466">
    <property type="entry name" value="Ribosomal_L10"/>
    <property type="match status" value="1"/>
</dbReference>
<dbReference type="SUPFAM" id="SSF160369">
    <property type="entry name" value="Ribosomal protein L10-like"/>
    <property type="match status" value="1"/>
</dbReference>
<evidence type="ECO:0000255" key="1">
    <source>
        <dbReference type="HAMAP-Rule" id="MF_00362"/>
    </source>
</evidence>
<evidence type="ECO:0000305" key="2"/>